<accession>Q54RD6</accession>
<keyword id="KW-1003">Cell membrane</keyword>
<keyword id="KW-0378">Hydrolase</keyword>
<keyword id="KW-0464">Manganese</keyword>
<keyword id="KW-0472">Membrane</keyword>
<keyword id="KW-0479">Metal-binding</keyword>
<keyword id="KW-0488">Methylation</keyword>
<keyword id="KW-0904">Protein phosphatase</keyword>
<keyword id="KW-1185">Reference proteome</keyword>
<dbReference type="EC" id="3.1.3.16" evidence="5"/>
<dbReference type="EMBL" id="AAFI02000051">
    <property type="protein sequence ID" value="EAL65832.1"/>
    <property type="molecule type" value="Genomic_DNA"/>
</dbReference>
<dbReference type="RefSeq" id="XP_639209.1">
    <property type="nucleotide sequence ID" value="XM_634117.1"/>
</dbReference>
<dbReference type="SMR" id="Q54RD6"/>
<dbReference type="STRING" id="44689.Q54RD6"/>
<dbReference type="PaxDb" id="44689-DDB0234188"/>
<dbReference type="EnsemblProtists" id="EAL65832">
    <property type="protein sequence ID" value="EAL65832"/>
    <property type="gene ID" value="DDB_G0283187"/>
</dbReference>
<dbReference type="GeneID" id="8623982"/>
<dbReference type="KEGG" id="ddi:DDB_G0283187"/>
<dbReference type="dictyBase" id="DDB_G0283187">
    <property type="gene designation" value="pho2b"/>
</dbReference>
<dbReference type="VEuPathDB" id="AmoebaDB:DDB_G0283187"/>
<dbReference type="eggNOG" id="KOG0372">
    <property type="taxonomic scope" value="Eukaryota"/>
</dbReference>
<dbReference type="HOGENOM" id="CLU_004962_8_1_1"/>
<dbReference type="InParanoid" id="Q54RD6"/>
<dbReference type="OMA" id="KIGGYPP"/>
<dbReference type="PhylomeDB" id="Q54RD6"/>
<dbReference type="PRO" id="PR:Q54RD6"/>
<dbReference type="Proteomes" id="UP000002195">
    <property type="component" value="Chromosome 4"/>
</dbReference>
<dbReference type="GO" id="GO:0090443">
    <property type="term" value="C:FAR/SIN/STRIPAK complex"/>
    <property type="evidence" value="ECO:0000318"/>
    <property type="project" value="GO_Central"/>
</dbReference>
<dbReference type="GO" id="GO:0005886">
    <property type="term" value="C:plasma membrane"/>
    <property type="evidence" value="ECO:0007669"/>
    <property type="project" value="UniProtKB-SubCell"/>
</dbReference>
<dbReference type="GO" id="GO:1905742">
    <property type="term" value="C:Ras guanyl-nucleotide exchange factor complex"/>
    <property type="evidence" value="ECO:0000314"/>
    <property type="project" value="dictyBase"/>
</dbReference>
<dbReference type="GO" id="GO:0046872">
    <property type="term" value="F:metal ion binding"/>
    <property type="evidence" value="ECO:0007669"/>
    <property type="project" value="UniProtKB-KW"/>
</dbReference>
<dbReference type="GO" id="GO:0004722">
    <property type="term" value="F:protein serine/threonine phosphatase activity"/>
    <property type="evidence" value="ECO:0000318"/>
    <property type="project" value="GO_Central"/>
</dbReference>
<dbReference type="GO" id="GO:0061509">
    <property type="term" value="P:asymmetric protein localization to old mitotic spindle pole body"/>
    <property type="evidence" value="ECO:0000318"/>
    <property type="project" value="GO_Central"/>
</dbReference>
<dbReference type="CDD" id="cd07415">
    <property type="entry name" value="MPP_PP2A_PP4_PP6"/>
    <property type="match status" value="1"/>
</dbReference>
<dbReference type="FunFam" id="3.60.21.10:FF:000040">
    <property type="entry name" value="Serine/threonine-protein phosphatase"/>
    <property type="match status" value="1"/>
</dbReference>
<dbReference type="Gene3D" id="3.60.21.10">
    <property type="match status" value="1"/>
</dbReference>
<dbReference type="InterPro" id="IPR004843">
    <property type="entry name" value="Calcineurin-like_PHP_ApaH"/>
</dbReference>
<dbReference type="InterPro" id="IPR029052">
    <property type="entry name" value="Metallo-depent_PP-like"/>
</dbReference>
<dbReference type="InterPro" id="IPR047129">
    <property type="entry name" value="PPA2-like"/>
</dbReference>
<dbReference type="InterPro" id="IPR006186">
    <property type="entry name" value="Ser/Thr-sp_prot-phosphatase"/>
</dbReference>
<dbReference type="PANTHER" id="PTHR45619">
    <property type="entry name" value="SERINE/THREONINE-PROTEIN PHOSPHATASE PP2A-RELATED"/>
    <property type="match status" value="1"/>
</dbReference>
<dbReference type="Pfam" id="PF00149">
    <property type="entry name" value="Metallophos"/>
    <property type="match status" value="1"/>
</dbReference>
<dbReference type="PRINTS" id="PR00114">
    <property type="entry name" value="STPHPHTASE"/>
</dbReference>
<dbReference type="SMART" id="SM00156">
    <property type="entry name" value="PP2Ac"/>
    <property type="match status" value="1"/>
</dbReference>
<dbReference type="SUPFAM" id="SSF56300">
    <property type="entry name" value="Metallo-dependent phosphatases"/>
    <property type="match status" value="1"/>
</dbReference>
<dbReference type="PROSITE" id="PS00125">
    <property type="entry name" value="SER_THR_PHOSPHATASE"/>
    <property type="match status" value="1"/>
</dbReference>
<organism>
    <name type="scientific">Dictyostelium discoideum</name>
    <name type="common">Social amoeba</name>
    <dbReference type="NCBI Taxonomy" id="44689"/>
    <lineage>
        <taxon>Eukaryota</taxon>
        <taxon>Amoebozoa</taxon>
        <taxon>Evosea</taxon>
        <taxon>Eumycetozoa</taxon>
        <taxon>Dictyostelia</taxon>
        <taxon>Dictyosteliales</taxon>
        <taxon>Dictyosteliaceae</taxon>
        <taxon>Dictyostelium</taxon>
    </lineage>
</organism>
<protein>
    <recommendedName>
        <fullName evidence="3">Protein phosphatase 2A catalytic subunit B</fullName>
        <ecNumber evidence="5">3.1.3.16</ecNumber>
    </recommendedName>
    <alternativeName>
        <fullName evidence="3">PP2A-C2</fullName>
    </alternativeName>
</protein>
<proteinExistence type="evidence at protein level"/>
<evidence type="ECO:0000250" key="1">
    <source>
        <dbReference type="UniProtKB" id="P36873"/>
    </source>
</evidence>
<evidence type="ECO:0000269" key="2">
    <source>
    </source>
</evidence>
<evidence type="ECO:0000303" key="3">
    <source>
    </source>
</evidence>
<evidence type="ECO:0000305" key="4"/>
<evidence type="ECO:0000305" key="5">
    <source>
    </source>
</evidence>
<name>PP2AB_DICDI</name>
<reference key="1">
    <citation type="journal article" date="2005" name="Nature">
        <title>The genome of the social amoeba Dictyostelium discoideum.</title>
        <authorList>
            <person name="Eichinger L."/>
            <person name="Pachebat J.A."/>
            <person name="Gloeckner G."/>
            <person name="Rajandream M.A."/>
            <person name="Sucgang R."/>
            <person name="Berriman M."/>
            <person name="Song J."/>
            <person name="Olsen R."/>
            <person name="Szafranski K."/>
            <person name="Xu Q."/>
            <person name="Tunggal B."/>
            <person name="Kummerfeld S."/>
            <person name="Madera M."/>
            <person name="Konfortov B.A."/>
            <person name="Rivero F."/>
            <person name="Bankier A.T."/>
            <person name="Lehmann R."/>
            <person name="Hamlin N."/>
            <person name="Davies R."/>
            <person name="Gaudet P."/>
            <person name="Fey P."/>
            <person name="Pilcher K."/>
            <person name="Chen G."/>
            <person name="Saunders D."/>
            <person name="Sodergren E.J."/>
            <person name="Davis P."/>
            <person name="Kerhornou A."/>
            <person name="Nie X."/>
            <person name="Hall N."/>
            <person name="Anjard C."/>
            <person name="Hemphill L."/>
            <person name="Bason N."/>
            <person name="Farbrother P."/>
            <person name="Desany B."/>
            <person name="Just E."/>
            <person name="Morio T."/>
            <person name="Rost R."/>
            <person name="Churcher C.M."/>
            <person name="Cooper J."/>
            <person name="Haydock S."/>
            <person name="van Driessche N."/>
            <person name="Cronin A."/>
            <person name="Goodhead I."/>
            <person name="Muzny D.M."/>
            <person name="Mourier T."/>
            <person name="Pain A."/>
            <person name="Lu M."/>
            <person name="Harper D."/>
            <person name="Lindsay R."/>
            <person name="Hauser H."/>
            <person name="James K.D."/>
            <person name="Quiles M."/>
            <person name="Madan Babu M."/>
            <person name="Saito T."/>
            <person name="Buchrieser C."/>
            <person name="Wardroper A."/>
            <person name="Felder M."/>
            <person name="Thangavelu M."/>
            <person name="Johnson D."/>
            <person name="Knights A."/>
            <person name="Loulseged H."/>
            <person name="Mungall K.L."/>
            <person name="Oliver K."/>
            <person name="Price C."/>
            <person name="Quail M.A."/>
            <person name="Urushihara H."/>
            <person name="Hernandez J."/>
            <person name="Rabbinowitsch E."/>
            <person name="Steffen D."/>
            <person name="Sanders M."/>
            <person name="Ma J."/>
            <person name="Kohara Y."/>
            <person name="Sharp S."/>
            <person name="Simmonds M.N."/>
            <person name="Spiegler S."/>
            <person name="Tivey A."/>
            <person name="Sugano S."/>
            <person name="White B."/>
            <person name="Walker D."/>
            <person name="Woodward J.R."/>
            <person name="Winckler T."/>
            <person name="Tanaka Y."/>
            <person name="Shaulsky G."/>
            <person name="Schleicher M."/>
            <person name="Weinstock G.M."/>
            <person name="Rosenthal A."/>
            <person name="Cox E.C."/>
            <person name="Chisholm R.L."/>
            <person name="Gibbs R.A."/>
            <person name="Loomis W.F."/>
            <person name="Platzer M."/>
            <person name="Kay R.R."/>
            <person name="Williams J.G."/>
            <person name="Dear P.H."/>
            <person name="Noegel A.A."/>
            <person name="Barrell B.G."/>
            <person name="Kuspa A."/>
        </authorList>
    </citation>
    <scope>NUCLEOTIDE SEQUENCE [LARGE SCALE GENOMIC DNA]</scope>
    <source>
        <strain>AX4</strain>
    </source>
</reference>
<reference key="2">
    <citation type="journal article" date="2010" name="Dev. Cell">
        <title>A Ras signaling complex controls the RasC-TORC2 pathway and directed cell migration.</title>
        <authorList>
            <person name="Charest P.G."/>
            <person name="Shen Z."/>
            <person name="Lakoduk A."/>
            <person name="Sasaki A.T."/>
            <person name="Briggs S.P."/>
            <person name="Firtel R.A."/>
        </authorList>
    </citation>
    <scope>IDENTIFICATION IN THE SCA1 COMPLEX</scope>
    <scope>FUNCTION</scope>
</reference>
<feature type="chain" id="PRO_0000368207" description="Protein phosphatase 2A catalytic subunit B">
    <location>
        <begin position="1"/>
        <end position="312"/>
    </location>
</feature>
<feature type="active site" description="Proton donor" evidence="1">
    <location>
        <position position="116"/>
    </location>
</feature>
<feature type="binding site" evidence="1">
    <location>
        <position position="55"/>
    </location>
    <ligand>
        <name>Mn(2+)</name>
        <dbReference type="ChEBI" id="CHEBI:29035"/>
        <label>1</label>
    </ligand>
</feature>
<feature type="binding site" evidence="1">
    <location>
        <position position="57"/>
    </location>
    <ligand>
        <name>Mn(2+)</name>
        <dbReference type="ChEBI" id="CHEBI:29035"/>
        <label>1</label>
    </ligand>
</feature>
<feature type="binding site" evidence="1">
    <location>
        <position position="83"/>
    </location>
    <ligand>
        <name>Mn(2+)</name>
        <dbReference type="ChEBI" id="CHEBI:29035"/>
        <label>1</label>
    </ligand>
</feature>
<feature type="binding site" evidence="1">
    <location>
        <position position="83"/>
    </location>
    <ligand>
        <name>Mn(2+)</name>
        <dbReference type="ChEBI" id="CHEBI:29035"/>
        <label>2</label>
    </ligand>
</feature>
<feature type="binding site" evidence="1">
    <location>
        <position position="115"/>
    </location>
    <ligand>
        <name>Mn(2+)</name>
        <dbReference type="ChEBI" id="CHEBI:29035"/>
        <label>2</label>
    </ligand>
</feature>
<feature type="binding site" evidence="1">
    <location>
        <position position="165"/>
    </location>
    <ligand>
        <name>Mn(2+)</name>
        <dbReference type="ChEBI" id="CHEBI:29035"/>
        <label>2</label>
    </ligand>
</feature>
<feature type="binding site" evidence="1">
    <location>
        <position position="240"/>
    </location>
    <ligand>
        <name>Mn(2+)</name>
        <dbReference type="ChEBI" id="CHEBI:29035"/>
        <label>2</label>
    </ligand>
</feature>
<comment type="function">
    <text evidence="2">Component of the Sca1 complex, a regulator of cell motility, chemotaxis and signal relay (PubMed:20493808). The Sca1 complex is recruited to the plasma membrane in a chemoattractant- and F-actin-dependent manner and is enriched at the leading edge of chemotaxing cells where it regulates F-actin dynamics and signal relay by controlling the activation of rasC and the downstream target of rapamycin complex 2 (TORC2)-Akt/protein kinase B (PKB) pathway (PubMed:20493808).</text>
</comment>
<comment type="catalytic activity">
    <reaction evidence="5">
        <text>O-phospho-L-seryl-[protein] + H2O = L-seryl-[protein] + phosphate</text>
        <dbReference type="Rhea" id="RHEA:20629"/>
        <dbReference type="Rhea" id="RHEA-COMP:9863"/>
        <dbReference type="Rhea" id="RHEA-COMP:11604"/>
        <dbReference type="ChEBI" id="CHEBI:15377"/>
        <dbReference type="ChEBI" id="CHEBI:29999"/>
        <dbReference type="ChEBI" id="CHEBI:43474"/>
        <dbReference type="ChEBI" id="CHEBI:83421"/>
        <dbReference type="EC" id="3.1.3.16"/>
    </reaction>
</comment>
<comment type="catalytic activity">
    <reaction evidence="5">
        <text>O-phospho-L-threonyl-[protein] + H2O = L-threonyl-[protein] + phosphate</text>
        <dbReference type="Rhea" id="RHEA:47004"/>
        <dbReference type="Rhea" id="RHEA-COMP:11060"/>
        <dbReference type="Rhea" id="RHEA-COMP:11605"/>
        <dbReference type="ChEBI" id="CHEBI:15377"/>
        <dbReference type="ChEBI" id="CHEBI:30013"/>
        <dbReference type="ChEBI" id="CHEBI:43474"/>
        <dbReference type="ChEBI" id="CHEBI:61977"/>
        <dbReference type="EC" id="3.1.3.16"/>
    </reaction>
</comment>
<comment type="cofactor">
    <cofactor evidence="1">
        <name>Mn(2+)</name>
        <dbReference type="ChEBI" id="CHEBI:29035"/>
    </cofactor>
    <text evidence="1">Binds 2 manganese ions per subunit.</text>
</comment>
<comment type="subunit">
    <text evidence="2">Component of the Sca1 complex composed of at least gefA, gefH, scaA, phr, and the protein phosphatase 2A subunits pppA and pho2B (PubMed:20493808).</text>
</comment>
<comment type="subcellular location">
    <subcellularLocation>
        <location evidence="2">Cell membrane</location>
    </subcellularLocation>
    <text evidence="2">The Sca1 complex is recruited to the plasma membrane in a chemoattractant- and F-actin-dependent manner and is enriched at the leading edge of chemotaxing cells (PubMed:20493808). Membrane localization of the Sca1 complex is regulated by scaA phosphorylation by PKB and PKB-related PKBR1 (PubMed:20493808).</text>
</comment>
<comment type="similarity">
    <text evidence="4">Belongs to the PPP phosphatase family. PP-2A subfamily.</text>
</comment>
<sequence>MNTSTFNLDHCIEKLQKCEILPESTIKEITDKMKELLISESNVQEIRSPVTVVGDVHGQFYDVLEIFKIGGQCPDTNYLFLGDYVDRGYHSVETISLLTCLKLRYPSRITLLRGNHESRQITQVYGFYGECMRKYGNPTVWKYFTEMFDYLSVAAIIDEAIYCVHGGLSPSALSIDQIKVLDRFQEVPNEGALSDILWSDPDPDREGFVESQRGAGYSYGKDVTLRFLQNNKMQHIIRAHQLCMDGYQTLFDNKLSTVWSAPNYCNRCGNMASIVEVNEKLERYFNTYAAAPQSLSNKPTLDTNKELPDYFL</sequence>
<gene>
    <name evidence="3" type="primary">pho2B</name>
    <name type="ORF">DDB_G0283187</name>
</gene>